<protein>
    <recommendedName>
        <fullName evidence="5">Very-long-chain aldehyde decarbonylase GL1-9</fullName>
        <ecNumber evidence="1">4.1.99.5</ecNumber>
    </recommendedName>
    <alternativeName>
        <fullName evidence="4">Protein GLOSSY 1-9</fullName>
    </alternativeName>
</protein>
<dbReference type="EC" id="4.1.99.5" evidence="1"/>
<dbReference type="EMBL" id="AP008213">
    <property type="protein sequence ID" value="BAF22260.1"/>
    <property type="molecule type" value="Genomic_DNA"/>
</dbReference>
<dbReference type="EMBL" id="AP014963">
    <property type="protein sequence ID" value="BAT02750.1"/>
    <property type="molecule type" value="Genomic_DNA"/>
</dbReference>
<dbReference type="EMBL" id="CM000144">
    <property type="protein sequence ID" value="EEE67635.1"/>
    <property type="molecule type" value="Genomic_DNA"/>
</dbReference>
<dbReference type="EMBL" id="AK070893">
    <property type="protein sequence ID" value="BAG92195.1"/>
    <property type="molecule type" value="mRNA"/>
</dbReference>
<dbReference type="FunCoup" id="Q0D4G3">
    <property type="interactions" value="42"/>
</dbReference>
<dbReference type="STRING" id="39947.Q0D4G3"/>
<dbReference type="PaxDb" id="39947-Q0D4G3"/>
<dbReference type="EnsemblPlants" id="Os07t0627700-01">
    <property type="protein sequence ID" value="Os07t0627700-01"/>
    <property type="gene ID" value="Os07g0627700"/>
</dbReference>
<dbReference type="Gramene" id="Os07t0627700-01">
    <property type="protein sequence ID" value="Os07t0627700-01"/>
    <property type="gene ID" value="Os07g0627700"/>
</dbReference>
<dbReference type="KEGG" id="dosa:Os07g0627700"/>
<dbReference type="KEGG" id="osa:4343979"/>
<dbReference type="eggNOG" id="KOG0874">
    <property type="taxonomic scope" value="Eukaryota"/>
</dbReference>
<dbReference type="HOGENOM" id="CLU_043293_1_0_1"/>
<dbReference type="InParanoid" id="Q0D4G3"/>
<dbReference type="OMA" id="WSDELMA"/>
<dbReference type="OrthoDB" id="408954at2759"/>
<dbReference type="PlantReactome" id="R-OSA-1119325">
    <property type="pathway name" value="Sphingolipid metabolism"/>
</dbReference>
<dbReference type="Proteomes" id="UP000000763">
    <property type="component" value="Chromosome 7"/>
</dbReference>
<dbReference type="Proteomes" id="UP000007752">
    <property type="component" value="Chromosome 7"/>
</dbReference>
<dbReference type="Proteomes" id="UP000059680">
    <property type="component" value="Chromosome 7"/>
</dbReference>
<dbReference type="ExpressionAtlas" id="Q0D4G3">
    <property type="expression patterns" value="baseline and differential"/>
</dbReference>
<dbReference type="GO" id="GO:0005789">
    <property type="term" value="C:endoplasmic reticulum membrane"/>
    <property type="evidence" value="ECO:0000318"/>
    <property type="project" value="GO_Central"/>
</dbReference>
<dbReference type="GO" id="GO:0071771">
    <property type="term" value="F:aldehyde oxygenase (deformylating) activity"/>
    <property type="evidence" value="ECO:0007669"/>
    <property type="project" value="UniProtKB-EC"/>
</dbReference>
<dbReference type="GO" id="GO:0005506">
    <property type="term" value="F:iron ion binding"/>
    <property type="evidence" value="ECO:0007669"/>
    <property type="project" value="InterPro"/>
</dbReference>
<dbReference type="GO" id="GO:0016491">
    <property type="term" value="F:oxidoreductase activity"/>
    <property type="evidence" value="ECO:0000318"/>
    <property type="project" value="GO_Central"/>
</dbReference>
<dbReference type="GO" id="GO:0008610">
    <property type="term" value="P:lipid biosynthetic process"/>
    <property type="evidence" value="ECO:0007669"/>
    <property type="project" value="InterPro"/>
</dbReference>
<dbReference type="InterPro" id="IPR006694">
    <property type="entry name" value="Fatty_acid_hydroxylase"/>
</dbReference>
<dbReference type="InterPro" id="IPR050307">
    <property type="entry name" value="Sterol_Desaturase_Related"/>
</dbReference>
<dbReference type="PANTHER" id="PTHR11863">
    <property type="entry name" value="STEROL DESATURASE"/>
    <property type="match status" value="1"/>
</dbReference>
<dbReference type="Pfam" id="PF04116">
    <property type="entry name" value="FA_hydroxylase"/>
    <property type="match status" value="1"/>
</dbReference>
<organism>
    <name type="scientific">Oryza sativa subsp. japonica</name>
    <name type="common">Rice</name>
    <dbReference type="NCBI Taxonomy" id="39947"/>
    <lineage>
        <taxon>Eukaryota</taxon>
        <taxon>Viridiplantae</taxon>
        <taxon>Streptophyta</taxon>
        <taxon>Embryophyta</taxon>
        <taxon>Tracheophyta</taxon>
        <taxon>Spermatophyta</taxon>
        <taxon>Magnoliopsida</taxon>
        <taxon>Liliopsida</taxon>
        <taxon>Poales</taxon>
        <taxon>Poaceae</taxon>
        <taxon>BOP clade</taxon>
        <taxon>Oryzoideae</taxon>
        <taxon>Oryzeae</taxon>
        <taxon>Oryzinae</taxon>
        <taxon>Oryza</taxon>
        <taxon>Oryza sativa</taxon>
    </lineage>
</organism>
<reference key="1">
    <citation type="journal article" date="2005" name="Nature">
        <title>The map-based sequence of the rice genome.</title>
        <authorList>
            <consortium name="International rice genome sequencing project (IRGSP)"/>
        </authorList>
    </citation>
    <scope>NUCLEOTIDE SEQUENCE [LARGE SCALE GENOMIC DNA]</scope>
    <source>
        <strain>cv. Nipponbare</strain>
    </source>
</reference>
<reference key="2">
    <citation type="journal article" date="2008" name="Nucleic Acids Res.">
        <title>The rice annotation project database (RAP-DB): 2008 update.</title>
        <authorList>
            <consortium name="The rice annotation project (RAP)"/>
        </authorList>
    </citation>
    <scope>GENOME REANNOTATION</scope>
    <source>
        <strain>cv. Nipponbare</strain>
    </source>
</reference>
<reference key="3">
    <citation type="journal article" date="2013" name="Rice">
        <title>Improvement of the Oryza sativa Nipponbare reference genome using next generation sequence and optical map data.</title>
        <authorList>
            <person name="Kawahara Y."/>
            <person name="de la Bastide M."/>
            <person name="Hamilton J.P."/>
            <person name="Kanamori H."/>
            <person name="McCombie W.R."/>
            <person name="Ouyang S."/>
            <person name="Schwartz D.C."/>
            <person name="Tanaka T."/>
            <person name="Wu J."/>
            <person name="Zhou S."/>
            <person name="Childs K.L."/>
            <person name="Davidson R.M."/>
            <person name="Lin H."/>
            <person name="Quesada-Ocampo L."/>
            <person name="Vaillancourt B."/>
            <person name="Sakai H."/>
            <person name="Lee S.S."/>
            <person name="Kim J."/>
            <person name="Numa H."/>
            <person name="Itoh T."/>
            <person name="Buell C.R."/>
            <person name="Matsumoto T."/>
        </authorList>
    </citation>
    <scope>GENOME REANNOTATION</scope>
    <source>
        <strain>cv. Nipponbare</strain>
    </source>
</reference>
<reference key="4">
    <citation type="journal article" date="2005" name="PLoS Biol.">
        <title>The genomes of Oryza sativa: a history of duplications.</title>
        <authorList>
            <person name="Yu J."/>
            <person name="Wang J."/>
            <person name="Lin W."/>
            <person name="Li S."/>
            <person name="Li H."/>
            <person name="Zhou J."/>
            <person name="Ni P."/>
            <person name="Dong W."/>
            <person name="Hu S."/>
            <person name="Zeng C."/>
            <person name="Zhang J."/>
            <person name="Zhang Y."/>
            <person name="Li R."/>
            <person name="Xu Z."/>
            <person name="Li S."/>
            <person name="Li X."/>
            <person name="Zheng H."/>
            <person name="Cong L."/>
            <person name="Lin L."/>
            <person name="Yin J."/>
            <person name="Geng J."/>
            <person name="Li G."/>
            <person name="Shi J."/>
            <person name="Liu J."/>
            <person name="Lv H."/>
            <person name="Li J."/>
            <person name="Wang J."/>
            <person name="Deng Y."/>
            <person name="Ran L."/>
            <person name="Shi X."/>
            <person name="Wang X."/>
            <person name="Wu Q."/>
            <person name="Li C."/>
            <person name="Ren X."/>
            <person name="Wang J."/>
            <person name="Wang X."/>
            <person name="Li D."/>
            <person name="Liu D."/>
            <person name="Zhang X."/>
            <person name="Ji Z."/>
            <person name="Zhao W."/>
            <person name="Sun Y."/>
            <person name="Zhang Z."/>
            <person name="Bao J."/>
            <person name="Han Y."/>
            <person name="Dong L."/>
            <person name="Ji J."/>
            <person name="Chen P."/>
            <person name="Wu S."/>
            <person name="Liu J."/>
            <person name="Xiao Y."/>
            <person name="Bu D."/>
            <person name="Tan J."/>
            <person name="Yang L."/>
            <person name="Ye C."/>
            <person name="Zhang J."/>
            <person name="Xu J."/>
            <person name="Zhou Y."/>
            <person name="Yu Y."/>
            <person name="Zhang B."/>
            <person name="Zhuang S."/>
            <person name="Wei H."/>
            <person name="Liu B."/>
            <person name="Lei M."/>
            <person name="Yu H."/>
            <person name="Li Y."/>
            <person name="Xu H."/>
            <person name="Wei S."/>
            <person name="He X."/>
            <person name="Fang L."/>
            <person name="Zhang Z."/>
            <person name="Zhang Y."/>
            <person name="Huang X."/>
            <person name="Su Z."/>
            <person name="Tong W."/>
            <person name="Li J."/>
            <person name="Tong Z."/>
            <person name="Li S."/>
            <person name="Ye J."/>
            <person name="Wang L."/>
            <person name="Fang L."/>
            <person name="Lei T."/>
            <person name="Chen C.-S."/>
            <person name="Chen H.-C."/>
            <person name="Xu Z."/>
            <person name="Li H."/>
            <person name="Huang H."/>
            <person name="Zhang F."/>
            <person name="Xu H."/>
            <person name="Li N."/>
            <person name="Zhao C."/>
            <person name="Li S."/>
            <person name="Dong L."/>
            <person name="Huang Y."/>
            <person name="Li L."/>
            <person name="Xi Y."/>
            <person name="Qi Q."/>
            <person name="Li W."/>
            <person name="Zhang B."/>
            <person name="Hu W."/>
            <person name="Zhang Y."/>
            <person name="Tian X."/>
            <person name="Jiao Y."/>
            <person name="Liang X."/>
            <person name="Jin J."/>
            <person name="Gao L."/>
            <person name="Zheng W."/>
            <person name="Hao B."/>
            <person name="Liu S.-M."/>
            <person name="Wang W."/>
            <person name="Yuan L."/>
            <person name="Cao M."/>
            <person name="McDermott J."/>
            <person name="Samudrala R."/>
            <person name="Wang J."/>
            <person name="Wong G.K.-S."/>
            <person name="Yang H."/>
        </authorList>
    </citation>
    <scope>NUCLEOTIDE SEQUENCE [LARGE SCALE GENOMIC DNA]</scope>
    <source>
        <strain>cv. Nipponbare</strain>
    </source>
</reference>
<reference key="5">
    <citation type="journal article" date="2003" name="Science">
        <title>Collection, mapping, and annotation of over 28,000 cDNA clones from japonica rice.</title>
        <authorList>
            <consortium name="The rice full-length cDNA consortium"/>
        </authorList>
    </citation>
    <scope>NUCLEOTIDE SEQUENCE [LARGE SCALE MRNA]</scope>
    <source>
        <strain>cv. Nipponbare</strain>
    </source>
</reference>
<reference key="6">
    <citation type="journal article" date="2009" name="Plant Mol. Biol.">
        <title>Characterization of Glossy1-homologous genes in rice involved in leaf wax accumulation and drought resistance.</title>
        <authorList>
            <person name="Islam M.A."/>
            <person name="Du H."/>
            <person name="Ning J."/>
            <person name="Ye H."/>
            <person name="Xiong L."/>
        </authorList>
    </citation>
    <scope>TISSUE SPECIFICITY</scope>
    <scope>GENE FAMILY</scope>
    <scope>NOMENCLATURE</scope>
</reference>
<comment type="function">
    <text evidence="1">Aldehyde decarbonylase involved in the conversion of aldehydes to alkanes. Core component of a very-long-chain alkane synthesis complex.</text>
</comment>
<comment type="catalytic activity">
    <reaction evidence="1">
        <text>a long-chain fatty aldehyde + 2 NADPH + O2 + H(+) = a long-chain alkane + formate + 2 NADP(+) + H2O</text>
        <dbReference type="Rhea" id="RHEA:21440"/>
        <dbReference type="ChEBI" id="CHEBI:15377"/>
        <dbReference type="ChEBI" id="CHEBI:15378"/>
        <dbReference type="ChEBI" id="CHEBI:15379"/>
        <dbReference type="ChEBI" id="CHEBI:15740"/>
        <dbReference type="ChEBI" id="CHEBI:17176"/>
        <dbReference type="ChEBI" id="CHEBI:57783"/>
        <dbReference type="ChEBI" id="CHEBI:58349"/>
        <dbReference type="ChEBI" id="CHEBI:83563"/>
        <dbReference type="EC" id="4.1.99.5"/>
    </reaction>
</comment>
<comment type="subunit">
    <text evidence="1">Homodimer.</text>
</comment>
<comment type="subcellular location">
    <subcellularLocation>
        <location evidence="1">Endoplasmic reticulum membrane</location>
        <topology evidence="1">Multi-pass membrane protein</topology>
    </subcellularLocation>
</comment>
<comment type="tissue specificity">
    <text evidence="3">Expressed ubiquitously.</text>
</comment>
<comment type="similarity">
    <text evidence="5">Belongs to the sterol desaturase family.</text>
</comment>
<gene>
    <name evidence="4" type="primary">GL1-9</name>
    <name evidence="5" type="ordered locus">LOC_Os07g43460</name>
    <name evidence="6" type="ordered locus">Os07g0627700</name>
    <name evidence="8" type="ORF">OsJ_25211</name>
    <name evidence="7" type="ORF">OSNPB_070627700</name>
</gene>
<sequence>MVPWEGYVSDETMGTFAPIALYWVYAGGYQLVLHRRPLERYRLHTRAEEEEKNLVALPAVVRGVLLQQLVQAIVAMILFMVTSDSSAVVVQPPIIIQAFQFLVAMLVMDSWQYFVHRYMHQNKFLYRHIHSQHHRLIVPYAIGALYNHPLEGLLLDTVGGAISFLVSGMTPRTSVFFFCFAVLKTVDDHCGLWLPYNIFQSLFQNNTAYHDVHHQLQGSKYNYSQPFFSIWDRILGTHMPYNLVRRKEGGFEARPLRD</sequence>
<evidence type="ECO:0000250" key="1">
    <source>
        <dbReference type="UniProtKB" id="F4HVY0"/>
    </source>
</evidence>
<evidence type="ECO:0000255" key="2"/>
<evidence type="ECO:0000269" key="3">
    <source>
    </source>
</evidence>
<evidence type="ECO:0000303" key="4">
    <source>
    </source>
</evidence>
<evidence type="ECO:0000305" key="5"/>
<evidence type="ECO:0000312" key="6">
    <source>
        <dbReference type="EMBL" id="BAF22260.1"/>
    </source>
</evidence>
<evidence type="ECO:0000312" key="7">
    <source>
        <dbReference type="EMBL" id="BAT02750.1"/>
    </source>
</evidence>
<evidence type="ECO:0000312" key="8">
    <source>
        <dbReference type="EMBL" id="EEE67635.1"/>
    </source>
</evidence>
<keyword id="KW-0256">Endoplasmic reticulum</keyword>
<keyword id="KW-0456">Lyase</keyword>
<keyword id="KW-0472">Membrane</keyword>
<keyword id="KW-0521">NADP</keyword>
<keyword id="KW-1185">Reference proteome</keyword>
<keyword id="KW-0812">Transmembrane</keyword>
<keyword id="KW-1133">Transmembrane helix</keyword>
<feature type="chain" id="PRO_0000445882" description="Very-long-chain aldehyde decarbonylase GL1-9">
    <location>
        <begin position="1"/>
        <end position="258"/>
    </location>
</feature>
<feature type="transmembrane region" description="Helical" evidence="2">
    <location>
        <begin position="13"/>
        <end position="33"/>
    </location>
</feature>
<feature type="transmembrane region" description="Helical" evidence="2">
    <location>
        <begin position="63"/>
        <end position="83"/>
    </location>
</feature>
<feature type="transmembrane region" description="Helical" evidence="2">
    <location>
        <begin position="88"/>
        <end position="108"/>
    </location>
</feature>
<feature type="transmembrane region" description="Helical" evidence="2">
    <location>
        <begin position="149"/>
        <end position="169"/>
    </location>
</feature>
<feature type="transmembrane region" description="Helical" evidence="2">
    <location>
        <begin position="175"/>
        <end position="195"/>
    </location>
</feature>
<feature type="domain" description="Fatty acid hydroxylase" evidence="2">
    <location>
        <begin position="101"/>
        <end position="237"/>
    </location>
</feature>
<accession>Q0D4G3</accession>
<proteinExistence type="evidence at transcript level"/>
<name>GLO19_ORYSJ</name>